<feature type="chain" id="PRO_0000158695" description="Succinate dehydrogenase [ubiquinone] iron-sulfur subunit">
    <location>
        <begin position="1"/>
        <end position="262"/>
    </location>
</feature>
<feature type="domain" description="2Fe-2S ferredoxin-type" evidence="2">
    <location>
        <begin position="21"/>
        <end position="110"/>
    </location>
</feature>
<feature type="domain" description="4Fe-4S ferredoxin-type" evidence="3">
    <location>
        <begin position="154"/>
        <end position="184"/>
    </location>
</feature>
<feature type="binding site" evidence="1">
    <location>
        <position position="73"/>
    </location>
    <ligand>
        <name>[2Fe-2S] cluster</name>
        <dbReference type="ChEBI" id="CHEBI:190135"/>
    </ligand>
</feature>
<feature type="binding site" evidence="1">
    <location>
        <position position="78"/>
    </location>
    <ligand>
        <name>[2Fe-2S] cluster</name>
        <dbReference type="ChEBI" id="CHEBI:190135"/>
    </ligand>
</feature>
<feature type="binding site" evidence="1">
    <location>
        <position position="81"/>
    </location>
    <ligand>
        <name>[2Fe-2S] cluster</name>
        <dbReference type="ChEBI" id="CHEBI:190135"/>
    </ligand>
</feature>
<feature type="binding site" evidence="1">
    <location>
        <position position="93"/>
    </location>
    <ligand>
        <name>[2Fe-2S] cluster</name>
        <dbReference type="ChEBI" id="CHEBI:190135"/>
    </ligand>
</feature>
<feature type="binding site" evidence="1">
    <location>
        <position position="164"/>
    </location>
    <ligand>
        <name>[4Fe-4S] cluster</name>
        <dbReference type="ChEBI" id="CHEBI:49883"/>
    </ligand>
</feature>
<feature type="binding site" evidence="1">
    <location>
        <position position="167"/>
    </location>
    <ligand>
        <name>[4Fe-4S] cluster</name>
        <dbReference type="ChEBI" id="CHEBI:49883"/>
    </ligand>
</feature>
<feature type="binding site" evidence="1">
    <location>
        <position position="170"/>
    </location>
    <ligand>
        <name>[4Fe-4S] cluster</name>
        <dbReference type="ChEBI" id="CHEBI:49883"/>
    </ligand>
</feature>
<feature type="binding site" evidence="1">
    <location>
        <position position="174"/>
    </location>
    <ligand>
        <name>[3Fe-4S] cluster</name>
        <dbReference type="ChEBI" id="CHEBI:21137"/>
    </ligand>
</feature>
<feature type="binding site" evidence="1">
    <location>
        <position position="179"/>
    </location>
    <ligand>
        <name>a ubiquinone</name>
        <dbReference type="ChEBI" id="CHEBI:16389"/>
        <note>ligand shared with DHSD</note>
    </ligand>
</feature>
<feature type="binding site" evidence="1">
    <location>
        <position position="221"/>
    </location>
    <ligand>
        <name>[3Fe-4S] cluster</name>
        <dbReference type="ChEBI" id="CHEBI:21137"/>
    </ligand>
</feature>
<feature type="binding site" evidence="1">
    <location>
        <position position="227"/>
    </location>
    <ligand>
        <name>[3Fe-4S] cluster</name>
        <dbReference type="ChEBI" id="CHEBI:21137"/>
    </ligand>
</feature>
<feature type="binding site" evidence="1">
    <location>
        <position position="231"/>
    </location>
    <ligand>
        <name>[4Fe-4S] cluster</name>
        <dbReference type="ChEBI" id="CHEBI:49883"/>
    </ligand>
</feature>
<name>SDHB_CYACA</name>
<geneLocation type="mitochondrion"/>
<proteinExistence type="inferred from homology"/>
<sequence length="262" mass="30268">MNLFSLKAEKFLNLKTLSDLKLIKIFRWDSSEKKDPWYSTYVVSLKNCGPIVLDALIKIKNECDSTVSFRRSCREGICGSCAININGTNSLACLQKLNIKNNIIYVYPLPHIFVLKDLVVDLTNFYAQYRLIQPWLQSSLNIKSKKEIYQSKQDRLYLDGLYECILCACCSASCPSYWWNHDKYLGPAVLLQAYRWIVDSRDDNTLSRLLSLKDSYKLYRCHTIMNCTKTCPKHLNPGKVIASIKKRLLNLEVLGEKRDLNS</sequence>
<accession>P48933</accession>
<comment type="function">
    <text evidence="1">Iron-sulfur protein (IP) subunit of succinate dehydrogenase (SDH) that is involved in complex II of the mitochondrial electron transport chain and is responsible for transferring electrons from succinate to ubiquinone (coenzyme Q).</text>
</comment>
<comment type="catalytic activity">
    <reaction>
        <text>a quinone + succinate = fumarate + a quinol</text>
        <dbReference type="Rhea" id="RHEA:40523"/>
        <dbReference type="ChEBI" id="CHEBI:24646"/>
        <dbReference type="ChEBI" id="CHEBI:29806"/>
        <dbReference type="ChEBI" id="CHEBI:30031"/>
        <dbReference type="ChEBI" id="CHEBI:132124"/>
        <dbReference type="EC" id="1.3.5.1"/>
    </reaction>
</comment>
<comment type="cofactor">
    <cofactor evidence="1">
        <name>[2Fe-2S] cluster</name>
        <dbReference type="ChEBI" id="CHEBI:190135"/>
    </cofactor>
    <text evidence="1">Binds 1 [2Fe-2S] cluster.</text>
</comment>
<comment type="cofactor">
    <cofactor evidence="1">
        <name>[3Fe-4S] cluster</name>
        <dbReference type="ChEBI" id="CHEBI:21137"/>
    </cofactor>
    <text evidence="1">Binds 1 [3Fe-4S] cluster.</text>
</comment>
<comment type="cofactor">
    <cofactor evidence="1">
        <name>[4Fe-4S] cluster</name>
        <dbReference type="ChEBI" id="CHEBI:49883"/>
    </cofactor>
    <text evidence="1">Binds 1 [4Fe-4S] cluster.</text>
</comment>
<comment type="pathway">
    <text>Carbohydrate metabolism; tricarboxylic acid cycle; fumarate from succinate (eukaryal route): step 1/1.</text>
</comment>
<comment type="subunit">
    <text evidence="1">Component of complex II composed of four subunits: a flavoprotein (FP), an iron-sulfur protein (IP), and a cytochrome b composed of a large and a small subunit.</text>
</comment>
<comment type="subcellular location">
    <subcellularLocation>
        <location evidence="1">Mitochondrion inner membrane</location>
        <topology evidence="1">Peripheral membrane protein</topology>
        <orientation evidence="1">Matrix side</orientation>
    </subcellularLocation>
</comment>
<comment type="similarity">
    <text evidence="4">Belongs to the succinate dehydrogenase/fumarate reductase iron-sulfur protein family.</text>
</comment>
<reference key="1">
    <citation type="journal article" date="1996" name="Curr. Genet.">
        <title>Genes for two subunits of succinate dehydrogenase form a cluster on the mitochondrial genome of Rhodophyta.</title>
        <authorList>
            <person name="Viehmann S."/>
            <person name="Richard O."/>
            <person name="Boyen C."/>
            <person name="Zetsche K."/>
        </authorList>
    </citation>
    <scope>NUCLEOTIDE SEQUENCE [GENOMIC DNA]</scope>
    <source>
        <strain>RK-1</strain>
    </source>
</reference>
<organism>
    <name type="scientific">Cyanidium caldarium</name>
    <name type="common">Red alga</name>
    <dbReference type="NCBI Taxonomy" id="2771"/>
    <lineage>
        <taxon>Eukaryota</taxon>
        <taxon>Rhodophyta</taxon>
        <taxon>Bangiophyceae</taxon>
        <taxon>Cyanidiales</taxon>
        <taxon>Cyanidiaceae</taxon>
        <taxon>Cyanidium</taxon>
    </lineage>
</organism>
<dbReference type="EC" id="1.3.5.1"/>
<dbReference type="EMBL" id="Z48930">
    <property type="protein sequence ID" value="CAA88766.1"/>
    <property type="molecule type" value="Genomic_DNA"/>
</dbReference>
<dbReference type="PIR" id="S62756">
    <property type="entry name" value="S62756"/>
</dbReference>
<dbReference type="SMR" id="P48933"/>
<dbReference type="UniPathway" id="UPA00223">
    <property type="reaction ID" value="UER01006"/>
</dbReference>
<dbReference type="GO" id="GO:0005743">
    <property type="term" value="C:mitochondrial inner membrane"/>
    <property type="evidence" value="ECO:0007669"/>
    <property type="project" value="UniProtKB-SubCell"/>
</dbReference>
<dbReference type="GO" id="GO:0051537">
    <property type="term" value="F:2 iron, 2 sulfur cluster binding"/>
    <property type="evidence" value="ECO:0007669"/>
    <property type="project" value="UniProtKB-KW"/>
</dbReference>
<dbReference type="GO" id="GO:0051538">
    <property type="term" value="F:3 iron, 4 sulfur cluster binding"/>
    <property type="evidence" value="ECO:0007669"/>
    <property type="project" value="UniProtKB-KW"/>
</dbReference>
<dbReference type="GO" id="GO:0051539">
    <property type="term" value="F:4 iron, 4 sulfur cluster binding"/>
    <property type="evidence" value="ECO:0007669"/>
    <property type="project" value="UniProtKB-KW"/>
</dbReference>
<dbReference type="GO" id="GO:0009055">
    <property type="term" value="F:electron transfer activity"/>
    <property type="evidence" value="ECO:0007669"/>
    <property type="project" value="InterPro"/>
</dbReference>
<dbReference type="GO" id="GO:0046872">
    <property type="term" value="F:metal ion binding"/>
    <property type="evidence" value="ECO:0007669"/>
    <property type="project" value="UniProtKB-KW"/>
</dbReference>
<dbReference type="GO" id="GO:0008177">
    <property type="term" value="F:succinate dehydrogenase (quinone) activity"/>
    <property type="evidence" value="ECO:0007669"/>
    <property type="project" value="UniProtKB-EC"/>
</dbReference>
<dbReference type="GO" id="GO:0022904">
    <property type="term" value="P:respiratory electron transport chain"/>
    <property type="evidence" value="ECO:0007669"/>
    <property type="project" value="TreeGrafter"/>
</dbReference>
<dbReference type="GO" id="GO:0006099">
    <property type="term" value="P:tricarboxylic acid cycle"/>
    <property type="evidence" value="ECO:0007669"/>
    <property type="project" value="UniProtKB-UniPathway"/>
</dbReference>
<dbReference type="FunFam" id="1.10.1060.10:FF:000001">
    <property type="entry name" value="Succinate dehydrogenase iron-sulfur subunit SdhB"/>
    <property type="match status" value="1"/>
</dbReference>
<dbReference type="Gene3D" id="3.10.20.30">
    <property type="match status" value="1"/>
</dbReference>
<dbReference type="Gene3D" id="1.10.1060.10">
    <property type="entry name" value="Alpha-helical ferredoxin"/>
    <property type="match status" value="1"/>
</dbReference>
<dbReference type="InterPro" id="IPR036010">
    <property type="entry name" value="2Fe-2S_ferredoxin-like_sf"/>
</dbReference>
<dbReference type="InterPro" id="IPR001041">
    <property type="entry name" value="2Fe-2S_ferredoxin-type"/>
</dbReference>
<dbReference type="InterPro" id="IPR006058">
    <property type="entry name" value="2Fe2S_fd_BS"/>
</dbReference>
<dbReference type="InterPro" id="IPR017896">
    <property type="entry name" value="4Fe4S_Fe-S-bd"/>
</dbReference>
<dbReference type="InterPro" id="IPR017900">
    <property type="entry name" value="4Fe4S_Fe_S_CS"/>
</dbReference>
<dbReference type="InterPro" id="IPR012675">
    <property type="entry name" value="Beta-grasp_dom_sf"/>
</dbReference>
<dbReference type="InterPro" id="IPR009051">
    <property type="entry name" value="Helical_ferredxn"/>
</dbReference>
<dbReference type="InterPro" id="IPR050573">
    <property type="entry name" value="SDH/FRD_Iron-Sulfur"/>
</dbReference>
<dbReference type="InterPro" id="IPR004489">
    <property type="entry name" value="Succ_DH/fum_Rdtase_Fe-S"/>
</dbReference>
<dbReference type="InterPro" id="IPR025192">
    <property type="entry name" value="Succ_DH/fum_Rdtase_N"/>
</dbReference>
<dbReference type="NCBIfam" id="TIGR00384">
    <property type="entry name" value="dhsB"/>
    <property type="match status" value="1"/>
</dbReference>
<dbReference type="NCBIfam" id="NF004616">
    <property type="entry name" value="PRK05950.1"/>
    <property type="match status" value="1"/>
</dbReference>
<dbReference type="PANTHER" id="PTHR11921:SF29">
    <property type="entry name" value="SUCCINATE DEHYDROGENASE [UBIQUINONE] IRON-SULFUR SUBUNIT, MITOCHONDRIAL"/>
    <property type="match status" value="1"/>
</dbReference>
<dbReference type="PANTHER" id="PTHR11921">
    <property type="entry name" value="SUCCINATE DEHYDROGENASE IRON-SULFUR PROTEIN"/>
    <property type="match status" value="1"/>
</dbReference>
<dbReference type="Pfam" id="PF13085">
    <property type="entry name" value="Fer2_3"/>
    <property type="match status" value="1"/>
</dbReference>
<dbReference type="Pfam" id="PF13534">
    <property type="entry name" value="Fer4_17"/>
    <property type="match status" value="1"/>
</dbReference>
<dbReference type="SUPFAM" id="SSF54292">
    <property type="entry name" value="2Fe-2S ferredoxin-like"/>
    <property type="match status" value="1"/>
</dbReference>
<dbReference type="SUPFAM" id="SSF46548">
    <property type="entry name" value="alpha-helical ferredoxin"/>
    <property type="match status" value="1"/>
</dbReference>
<dbReference type="PROSITE" id="PS00197">
    <property type="entry name" value="2FE2S_FER_1"/>
    <property type="match status" value="1"/>
</dbReference>
<dbReference type="PROSITE" id="PS51085">
    <property type="entry name" value="2FE2S_FER_2"/>
    <property type="match status" value="1"/>
</dbReference>
<dbReference type="PROSITE" id="PS00198">
    <property type="entry name" value="4FE4S_FER_1"/>
    <property type="match status" value="1"/>
</dbReference>
<dbReference type="PROSITE" id="PS51379">
    <property type="entry name" value="4FE4S_FER_2"/>
    <property type="match status" value="1"/>
</dbReference>
<gene>
    <name type="primary">SDH2</name>
    <name type="synonym">SDHB</name>
</gene>
<keyword id="KW-0001">2Fe-2S</keyword>
<keyword id="KW-0003">3Fe-4S</keyword>
<keyword id="KW-0004">4Fe-4S</keyword>
<keyword id="KW-0249">Electron transport</keyword>
<keyword id="KW-0408">Iron</keyword>
<keyword id="KW-0411">Iron-sulfur</keyword>
<keyword id="KW-0472">Membrane</keyword>
<keyword id="KW-0479">Metal-binding</keyword>
<keyword id="KW-0496">Mitochondrion</keyword>
<keyword id="KW-0999">Mitochondrion inner membrane</keyword>
<keyword id="KW-0560">Oxidoreductase</keyword>
<keyword id="KW-0813">Transport</keyword>
<keyword id="KW-0816">Tricarboxylic acid cycle</keyword>
<protein>
    <recommendedName>
        <fullName>Succinate dehydrogenase [ubiquinone] iron-sulfur subunit</fullName>
        <ecNumber>1.3.5.1</ecNumber>
    </recommendedName>
    <alternativeName>
        <fullName>Iron-sulfur subunit of complex II</fullName>
        <shortName>Ip</shortName>
    </alternativeName>
</protein>
<evidence type="ECO:0000250" key="1"/>
<evidence type="ECO:0000255" key="2">
    <source>
        <dbReference type="PROSITE-ProRule" id="PRU00465"/>
    </source>
</evidence>
<evidence type="ECO:0000255" key="3">
    <source>
        <dbReference type="PROSITE-ProRule" id="PRU00711"/>
    </source>
</evidence>
<evidence type="ECO:0000305" key="4"/>